<name>SH_TUPVT</name>
<reference key="1">
    <citation type="journal article" date="2005" name="J. Virol.">
        <title>Characterization of the Tupaia rhabdovirus genome reveals a long open reading frame overlapping with P and a novel gene encoding a small hydrophobic protein.</title>
        <authorList>
            <person name="Springfeld C."/>
            <person name="Darai G."/>
            <person name="Cattaneo R."/>
        </authorList>
    </citation>
    <scope>NUCLEOTIDE SEQUENCE [GENOMIC RNA / MRNA]</scope>
</reference>
<keyword id="KW-0472">Membrane</keyword>
<keyword id="KW-1185">Reference proteome</keyword>
<keyword id="KW-0812">Transmembrane</keyword>
<keyword id="KW-1133">Transmembrane helix</keyword>
<organism>
    <name type="scientific">Tupaia virus (isolate Tupaia/Thailand/-/1986)</name>
    <name type="common">TUPV</name>
    <dbReference type="NCBI Taxonomy" id="1560034"/>
    <lineage>
        <taxon>Viruses</taxon>
        <taxon>Riboviria</taxon>
        <taxon>Orthornavirae</taxon>
        <taxon>Negarnaviricota</taxon>
        <taxon>Haploviricotina</taxon>
        <taxon>Monjiviricetes</taxon>
        <taxon>Mononegavirales</taxon>
        <taxon>Rhabdoviridae</taxon>
        <taxon>Alpharhabdovirinae</taxon>
        <taxon>Tupavirus</taxon>
        <taxon>Tupavirus tupaia</taxon>
    </lineage>
</organism>
<comment type="subcellular location">
    <subcellularLocation>
        <location evidence="1">Membrane</location>
        <topology evidence="1">Multi-pass membrane protein</topology>
    </subcellularLocation>
</comment>
<sequence length="93" mass="10630">MITTLIIIGAAFLVGPRTFKFVLAYLLGYYNAFGPPLQIVQFMVWLIIIYFPKKFFSLGWYFCHDAFSSYFGDPNGGQLPVSTKFHSLTDMID</sequence>
<feature type="chain" id="PRO_0000432060" description="Small hydrophobic protein">
    <location>
        <begin position="1"/>
        <end position="93"/>
    </location>
</feature>
<feature type="transmembrane region" description="Helical; Name=1" evidence="1">
    <location>
        <begin position="5"/>
        <end position="25"/>
    </location>
</feature>
<feature type="transmembrane region" description="Helical; Name=2" evidence="1">
    <location>
        <begin position="32"/>
        <end position="52"/>
    </location>
</feature>
<evidence type="ECO:0000255" key="1"/>
<evidence type="ECO:0000303" key="2">
    <source>
    </source>
</evidence>
<proteinExistence type="inferred from homology"/>
<gene>
    <name evidence="2" type="primary">SH</name>
</gene>
<dbReference type="EMBL" id="AY840978">
    <property type="protein sequence ID" value="AAX47600.1"/>
    <property type="molecule type" value="Genomic_RNA"/>
</dbReference>
<dbReference type="RefSeq" id="YP_238532.1">
    <property type="nucleotide sequence ID" value="NC_007020.1"/>
</dbReference>
<dbReference type="GeneID" id="3416613"/>
<dbReference type="KEGG" id="vg:3416613"/>
<dbReference type="Proteomes" id="UP000029771">
    <property type="component" value="Segment"/>
</dbReference>
<dbReference type="GO" id="GO:0016020">
    <property type="term" value="C:membrane"/>
    <property type="evidence" value="ECO:0007669"/>
    <property type="project" value="UniProtKB-SubCell"/>
</dbReference>
<protein>
    <recommendedName>
        <fullName evidence="2">Small hydrophobic protein</fullName>
        <shortName evidence="2">Protein SH</shortName>
    </recommendedName>
</protein>
<accession>Q4VKV4</accession>
<organismHost>
    <name type="scientific">Tupaia</name>
    <dbReference type="NCBI Taxonomy" id="9394"/>
</organismHost>